<feature type="chain" id="PRO_1000022890" description="2-C-methyl-D-erythritol 2,4-cyclodiphosphate synthase">
    <location>
        <begin position="1"/>
        <end position="157"/>
    </location>
</feature>
<feature type="binding site" evidence="1">
    <location>
        <begin position="8"/>
        <end position="10"/>
    </location>
    <ligand>
        <name>4-CDP-2-C-methyl-D-erythritol 2-phosphate</name>
        <dbReference type="ChEBI" id="CHEBI:57919"/>
    </ligand>
</feature>
<feature type="binding site" evidence="1">
    <location>
        <position position="8"/>
    </location>
    <ligand>
        <name>a divalent metal cation</name>
        <dbReference type="ChEBI" id="CHEBI:60240"/>
    </ligand>
</feature>
<feature type="binding site" evidence="1">
    <location>
        <position position="10"/>
    </location>
    <ligand>
        <name>a divalent metal cation</name>
        <dbReference type="ChEBI" id="CHEBI:60240"/>
    </ligand>
</feature>
<feature type="binding site" evidence="1">
    <location>
        <begin position="34"/>
        <end position="35"/>
    </location>
    <ligand>
        <name>4-CDP-2-C-methyl-D-erythritol 2-phosphate</name>
        <dbReference type="ChEBI" id="CHEBI:57919"/>
    </ligand>
</feature>
<feature type="binding site" evidence="1">
    <location>
        <position position="42"/>
    </location>
    <ligand>
        <name>a divalent metal cation</name>
        <dbReference type="ChEBI" id="CHEBI:60240"/>
    </ligand>
</feature>
<feature type="binding site" evidence="1">
    <location>
        <begin position="56"/>
        <end position="58"/>
    </location>
    <ligand>
        <name>4-CDP-2-C-methyl-D-erythritol 2-phosphate</name>
        <dbReference type="ChEBI" id="CHEBI:57919"/>
    </ligand>
</feature>
<feature type="binding site" evidence="1">
    <location>
        <begin position="61"/>
        <end position="65"/>
    </location>
    <ligand>
        <name>4-CDP-2-C-methyl-D-erythritol 2-phosphate</name>
        <dbReference type="ChEBI" id="CHEBI:57919"/>
    </ligand>
</feature>
<feature type="binding site" evidence="1">
    <location>
        <begin position="132"/>
        <end position="135"/>
    </location>
    <ligand>
        <name>4-CDP-2-C-methyl-D-erythritol 2-phosphate</name>
        <dbReference type="ChEBI" id="CHEBI:57919"/>
    </ligand>
</feature>
<feature type="binding site" evidence="1">
    <location>
        <position position="139"/>
    </location>
    <ligand>
        <name>4-CDP-2-C-methyl-D-erythritol 2-phosphate</name>
        <dbReference type="ChEBI" id="CHEBI:57919"/>
    </ligand>
</feature>
<feature type="binding site" evidence="1">
    <location>
        <position position="142"/>
    </location>
    <ligand>
        <name>4-CDP-2-C-methyl-D-erythritol 2-phosphate</name>
        <dbReference type="ChEBI" id="CHEBI:57919"/>
    </ligand>
</feature>
<feature type="site" description="Transition state stabilizer" evidence="1">
    <location>
        <position position="34"/>
    </location>
</feature>
<feature type="site" description="Transition state stabilizer" evidence="1">
    <location>
        <position position="133"/>
    </location>
</feature>
<protein>
    <recommendedName>
        <fullName evidence="1">2-C-methyl-D-erythritol 2,4-cyclodiphosphate synthase</fullName>
        <shortName evidence="1">MECDP-synthase</shortName>
        <shortName evidence="1">MECPP-synthase</shortName>
        <shortName evidence="1">MECPS</shortName>
        <ecNumber evidence="1">4.6.1.12</ecNumber>
    </recommendedName>
</protein>
<organism>
    <name type="scientific">Syntrophomonas wolfei subsp. wolfei (strain DSM 2245B / Goettingen)</name>
    <dbReference type="NCBI Taxonomy" id="335541"/>
    <lineage>
        <taxon>Bacteria</taxon>
        <taxon>Bacillati</taxon>
        <taxon>Bacillota</taxon>
        <taxon>Clostridia</taxon>
        <taxon>Eubacteriales</taxon>
        <taxon>Syntrophomonadaceae</taxon>
        <taxon>Syntrophomonas</taxon>
    </lineage>
</organism>
<proteinExistence type="inferred from homology"/>
<gene>
    <name evidence="1" type="primary">ispF</name>
    <name type="ordered locus">Swol_2360</name>
</gene>
<keyword id="KW-0414">Isoprene biosynthesis</keyword>
<keyword id="KW-0456">Lyase</keyword>
<keyword id="KW-0479">Metal-binding</keyword>
<keyword id="KW-1185">Reference proteome</keyword>
<sequence>MRVGYGYDVHRLQEGRRLVLGGVEIPHMQGLLGHSDADVLLHAICDALLGAAALGDIGQHFPDSDSQYKDINSLLLLKEVAGILQRAGWRVINVDSTVVAQEPRLAPHIKQMRQNIARVLAIESEQVSVKATTTEGLGFAGRQQGISAHAVVLIEQA</sequence>
<name>ISPF_SYNWW</name>
<accession>Q0AUF5</accession>
<reference key="1">
    <citation type="journal article" date="2010" name="Environ. Microbiol.">
        <title>The genome of Syntrophomonas wolfei: new insights into syntrophic metabolism and biohydrogen production.</title>
        <authorList>
            <person name="Sieber J.R."/>
            <person name="Sims D.R."/>
            <person name="Han C."/>
            <person name="Kim E."/>
            <person name="Lykidis A."/>
            <person name="Lapidus A.L."/>
            <person name="McDonnald E."/>
            <person name="Rohlin L."/>
            <person name="Culley D.E."/>
            <person name="Gunsalus R."/>
            <person name="McInerney M.J."/>
        </authorList>
    </citation>
    <scope>NUCLEOTIDE SEQUENCE [LARGE SCALE GENOMIC DNA]</scope>
    <source>
        <strain>DSM 2245B / Goettingen</strain>
    </source>
</reference>
<comment type="function">
    <text evidence="1">Involved in the biosynthesis of isopentenyl diphosphate (IPP) and dimethylallyl diphosphate (DMAPP), two major building blocks of isoprenoid compounds. Catalyzes the conversion of 4-diphosphocytidyl-2-C-methyl-D-erythritol 2-phosphate (CDP-ME2P) to 2-C-methyl-D-erythritol 2,4-cyclodiphosphate (ME-CPP) with a corresponding release of cytidine 5-monophosphate (CMP).</text>
</comment>
<comment type="catalytic activity">
    <reaction evidence="1">
        <text>4-CDP-2-C-methyl-D-erythritol 2-phosphate = 2-C-methyl-D-erythritol 2,4-cyclic diphosphate + CMP</text>
        <dbReference type="Rhea" id="RHEA:23864"/>
        <dbReference type="ChEBI" id="CHEBI:57919"/>
        <dbReference type="ChEBI" id="CHEBI:58483"/>
        <dbReference type="ChEBI" id="CHEBI:60377"/>
        <dbReference type="EC" id="4.6.1.12"/>
    </reaction>
</comment>
<comment type="cofactor">
    <cofactor evidence="1">
        <name>a divalent metal cation</name>
        <dbReference type="ChEBI" id="CHEBI:60240"/>
    </cofactor>
    <text evidence="1">Binds 1 divalent metal cation per subunit.</text>
</comment>
<comment type="pathway">
    <text evidence="1">Isoprenoid biosynthesis; isopentenyl diphosphate biosynthesis via DXP pathway; isopentenyl diphosphate from 1-deoxy-D-xylulose 5-phosphate: step 4/6.</text>
</comment>
<comment type="subunit">
    <text evidence="1">Homotrimer.</text>
</comment>
<comment type="similarity">
    <text evidence="1">Belongs to the IspF family.</text>
</comment>
<evidence type="ECO:0000255" key="1">
    <source>
        <dbReference type="HAMAP-Rule" id="MF_00107"/>
    </source>
</evidence>
<dbReference type="EC" id="4.6.1.12" evidence="1"/>
<dbReference type="EMBL" id="CP000448">
    <property type="protein sequence ID" value="ABI69649.1"/>
    <property type="molecule type" value="Genomic_DNA"/>
</dbReference>
<dbReference type="RefSeq" id="WP_011641733.1">
    <property type="nucleotide sequence ID" value="NC_008346.1"/>
</dbReference>
<dbReference type="SMR" id="Q0AUF5"/>
<dbReference type="STRING" id="335541.Swol_2360"/>
<dbReference type="KEGG" id="swo:Swol_2360"/>
<dbReference type="eggNOG" id="COG0245">
    <property type="taxonomic scope" value="Bacteria"/>
</dbReference>
<dbReference type="HOGENOM" id="CLU_084630_2_0_9"/>
<dbReference type="OrthoDB" id="9804336at2"/>
<dbReference type="UniPathway" id="UPA00056">
    <property type="reaction ID" value="UER00095"/>
</dbReference>
<dbReference type="Proteomes" id="UP000001968">
    <property type="component" value="Chromosome"/>
</dbReference>
<dbReference type="GO" id="GO:0008685">
    <property type="term" value="F:2-C-methyl-D-erythritol 2,4-cyclodiphosphate synthase activity"/>
    <property type="evidence" value="ECO:0007669"/>
    <property type="project" value="UniProtKB-UniRule"/>
</dbReference>
<dbReference type="GO" id="GO:0046872">
    <property type="term" value="F:metal ion binding"/>
    <property type="evidence" value="ECO:0007669"/>
    <property type="project" value="UniProtKB-KW"/>
</dbReference>
<dbReference type="GO" id="GO:0019288">
    <property type="term" value="P:isopentenyl diphosphate biosynthetic process, methylerythritol 4-phosphate pathway"/>
    <property type="evidence" value="ECO:0007669"/>
    <property type="project" value="UniProtKB-UniRule"/>
</dbReference>
<dbReference type="GO" id="GO:0016114">
    <property type="term" value="P:terpenoid biosynthetic process"/>
    <property type="evidence" value="ECO:0007669"/>
    <property type="project" value="InterPro"/>
</dbReference>
<dbReference type="CDD" id="cd00554">
    <property type="entry name" value="MECDP_synthase"/>
    <property type="match status" value="1"/>
</dbReference>
<dbReference type="FunFam" id="3.30.1330.50:FF:000001">
    <property type="entry name" value="2-C-methyl-D-erythritol 2,4-cyclodiphosphate synthase"/>
    <property type="match status" value="1"/>
</dbReference>
<dbReference type="Gene3D" id="3.30.1330.50">
    <property type="entry name" value="2-C-methyl-D-erythritol 2,4-cyclodiphosphate synthase"/>
    <property type="match status" value="1"/>
</dbReference>
<dbReference type="HAMAP" id="MF_00107">
    <property type="entry name" value="IspF"/>
    <property type="match status" value="1"/>
</dbReference>
<dbReference type="InterPro" id="IPR003526">
    <property type="entry name" value="MECDP_synthase"/>
</dbReference>
<dbReference type="InterPro" id="IPR020555">
    <property type="entry name" value="MECDP_synthase_CS"/>
</dbReference>
<dbReference type="InterPro" id="IPR036571">
    <property type="entry name" value="MECDP_synthase_sf"/>
</dbReference>
<dbReference type="NCBIfam" id="TIGR00151">
    <property type="entry name" value="ispF"/>
    <property type="match status" value="1"/>
</dbReference>
<dbReference type="PANTHER" id="PTHR43181">
    <property type="entry name" value="2-C-METHYL-D-ERYTHRITOL 2,4-CYCLODIPHOSPHATE SYNTHASE, CHLOROPLASTIC"/>
    <property type="match status" value="1"/>
</dbReference>
<dbReference type="PANTHER" id="PTHR43181:SF1">
    <property type="entry name" value="2-C-METHYL-D-ERYTHRITOL 2,4-CYCLODIPHOSPHATE SYNTHASE, CHLOROPLASTIC"/>
    <property type="match status" value="1"/>
</dbReference>
<dbReference type="Pfam" id="PF02542">
    <property type="entry name" value="YgbB"/>
    <property type="match status" value="1"/>
</dbReference>
<dbReference type="SUPFAM" id="SSF69765">
    <property type="entry name" value="IpsF-like"/>
    <property type="match status" value="1"/>
</dbReference>
<dbReference type="PROSITE" id="PS01350">
    <property type="entry name" value="ISPF"/>
    <property type="match status" value="1"/>
</dbReference>